<gene>
    <name evidence="1" type="primary">valS</name>
    <name type="ordered locus">TM_1817</name>
</gene>
<accession>Q9X2D7</accession>
<dbReference type="EC" id="6.1.1.9" evidence="1"/>
<dbReference type="EMBL" id="AE000512">
    <property type="protein sequence ID" value="AAD36880.1"/>
    <property type="molecule type" value="Genomic_DNA"/>
</dbReference>
<dbReference type="PIR" id="D72206">
    <property type="entry name" value="D72206"/>
</dbReference>
<dbReference type="RefSeq" id="NP_229614.1">
    <property type="nucleotide sequence ID" value="NC_000853.1"/>
</dbReference>
<dbReference type="RefSeq" id="WP_004082363.1">
    <property type="nucleotide sequence ID" value="NZ_CP011107.1"/>
</dbReference>
<dbReference type="SMR" id="Q9X2D7"/>
<dbReference type="FunCoup" id="Q9X2D7">
    <property type="interactions" value="388"/>
</dbReference>
<dbReference type="STRING" id="243274.TM_1817"/>
<dbReference type="PaxDb" id="243274-THEMA_05110"/>
<dbReference type="EnsemblBacteria" id="AAD36880">
    <property type="protein sequence ID" value="AAD36880"/>
    <property type="gene ID" value="TM_1817"/>
</dbReference>
<dbReference type="KEGG" id="tma:TM1817"/>
<dbReference type="KEGG" id="tmi:THEMA_05110"/>
<dbReference type="KEGG" id="tmm:Tmari_1827"/>
<dbReference type="KEGG" id="tmw:THMA_1862"/>
<dbReference type="eggNOG" id="COG0525">
    <property type="taxonomic scope" value="Bacteria"/>
</dbReference>
<dbReference type="InParanoid" id="Q9X2D7"/>
<dbReference type="OrthoDB" id="9810365at2"/>
<dbReference type="Proteomes" id="UP000008183">
    <property type="component" value="Chromosome"/>
</dbReference>
<dbReference type="GO" id="GO:0005829">
    <property type="term" value="C:cytosol"/>
    <property type="evidence" value="ECO:0000318"/>
    <property type="project" value="GO_Central"/>
</dbReference>
<dbReference type="GO" id="GO:0002161">
    <property type="term" value="F:aminoacyl-tRNA deacylase activity"/>
    <property type="evidence" value="ECO:0007669"/>
    <property type="project" value="InterPro"/>
</dbReference>
<dbReference type="GO" id="GO:0005524">
    <property type="term" value="F:ATP binding"/>
    <property type="evidence" value="ECO:0007669"/>
    <property type="project" value="UniProtKB-UniRule"/>
</dbReference>
<dbReference type="GO" id="GO:0004832">
    <property type="term" value="F:valine-tRNA ligase activity"/>
    <property type="evidence" value="ECO:0000318"/>
    <property type="project" value="GO_Central"/>
</dbReference>
<dbReference type="GO" id="GO:0006438">
    <property type="term" value="P:valyl-tRNA aminoacylation"/>
    <property type="evidence" value="ECO:0000318"/>
    <property type="project" value="GO_Central"/>
</dbReference>
<dbReference type="CDD" id="cd07962">
    <property type="entry name" value="Anticodon_Ia_Val"/>
    <property type="match status" value="1"/>
</dbReference>
<dbReference type="CDD" id="cd00817">
    <property type="entry name" value="ValRS_core"/>
    <property type="match status" value="1"/>
</dbReference>
<dbReference type="FunFam" id="1.10.287.380:FF:000001">
    <property type="entry name" value="Valine--tRNA ligase"/>
    <property type="match status" value="1"/>
</dbReference>
<dbReference type="FunFam" id="1.10.730.10:FF:000014">
    <property type="entry name" value="Valine--tRNA ligase"/>
    <property type="match status" value="1"/>
</dbReference>
<dbReference type="FunFam" id="3.40.50.620:FF:000032">
    <property type="entry name" value="Valine--tRNA ligase"/>
    <property type="match status" value="1"/>
</dbReference>
<dbReference type="FunFam" id="3.40.50.620:FF:000098">
    <property type="entry name" value="Valine--tRNA ligase"/>
    <property type="match status" value="1"/>
</dbReference>
<dbReference type="FunFam" id="3.90.740.10:FF:000015">
    <property type="entry name" value="Valine--tRNA ligase"/>
    <property type="match status" value="1"/>
</dbReference>
<dbReference type="Gene3D" id="3.40.50.620">
    <property type="entry name" value="HUPs"/>
    <property type="match status" value="2"/>
</dbReference>
<dbReference type="Gene3D" id="1.10.730.10">
    <property type="entry name" value="Isoleucyl-tRNA Synthetase, Domain 1"/>
    <property type="match status" value="1"/>
</dbReference>
<dbReference type="Gene3D" id="1.10.287.380">
    <property type="entry name" value="Valyl-tRNA synthetase, C-terminal domain"/>
    <property type="match status" value="1"/>
</dbReference>
<dbReference type="Gene3D" id="3.90.740.10">
    <property type="entry name" value="Valyl/Leucyl/Isoleucyl-tRNA synthetase, editing domain"/>
    <property type="match status" value="1"/>
</dbReference>
<dbReference type="HAMAP" id="MF_02004">
    <property type="entry name" value="Val_tRNA_synth_type1"/>
    <property type="match status" value="1"/>
</dbReference>
<dbReference type="InterPro" id="IPR001412">
    <property type="entry name" value="aa-tRNA-synth_I_CS"/>
</dbReference>
<dbReference type="InterPro" id="IPR002300">
    <property type="entry name" value="aa-tRNA-synth_Ia"/>
</dbReference>
<dbReference type="InterPro" id="IPR033705">
    <property type="entry name" value="Anticodon_Ia_Val"/>
</dbReference>
<dbReference type="InterPro" id="IPR013155">
    <property type="entry name" value="M/V/L/I-tRNA-synth_anticd-bd"/>
</dbReference>
<dbReference type="InterPro" id="IPR014729">
    <property type="entry name" value="Rossmann-like_a/b/a_fold"/>
</dbReference>
<dbReference type="InterPro" id="IPR010978">
    <property type="entry name" value="tRNA-bd_arm"/>
</dbReference>
<dbReference type="InterPro" id="IPR009080">
    <property type="entry name" value="tRNAsynth_Ia_anticodon-bd"/>
</dbReference>
<dbReference type="InterPro" id="IPR037118">
    <property type="entry name" value="Val-tRNA_synth_C_sf"/>
</dbReference>
<dbReference type="InterPro" id="IPR019499">
    <property type="entry name" value="Val-tRNA_synth_tRNA-bd"/>
</dbReference>
<dbReference type="InterPro" id="IPR009008">
    <property type="entry name" value="Val/Leu/Ile-tRNA-synth_edit"/>
</dbReference>
<dbReference type="InterPro" id="IPR002303">
    <property type="entry name" value="Valyl-tRNA_ligase"/>
</dbReference>
<dbReference type="NCBIfam" id="NF004349">
    <property type="entry name" value="PRK05729.1"/>
    <property type="match status" value="1"/>
</dbReference>
<dbReference type="NCBIfam" id="TIGR00422">
    <property type="entry name" value="valS"/>
    <property type="match status" value="1"/>
</dbReference>
<dbReference type="PANTHER" id="PTHR11946:SF93">
    <property type="entry name" value="VALINE--TRNA LIGASE, CHLOROPLASTIC_MITOCHONDRIAL 2"/>
    <property type="match status" value="1"/>
</dbReference>
<dbReference type="PANTHER" id="PTHR11946">
    <property type="entry name" value="VALYL-TRNA SYNTHETASES"/>
    <property type="match status" value="1"/>
</dbReference>
<dbReference type="Pfam" id="PF08264">
    <property type="entry name" value="Anticodon_1"/>
    <property type="match status" value="1"/>
</dbReference>
<dbReference type="Pfam" id="PF00133">
    <property type="entry name" value="tRNA-synt_1"/>
    <property type="match status" value="1"/>
</dbReference>
<dbReference type="Pfam" id="PF10458">
    <property type="entry name" value="Val_tRNA-synt_C"/>
    <property type="match status" value="1"/>
</dbReference>
<dbReference type="PRINTS" id="PR00986">
    <property type="entry name" value="TRNASYNTHVAL"/>
</dbReference>
<dbReference type="SUPFAM" id="SSF47323">
    <property type="entry name" value="Anticodon-binding domain of a subclass of class I aminoacyl-tRNA synthetases"/>
    <property type="match status" value="1"/>
</dbReference>
<dbReference type="SUPFAM" id="SSF52374">
    <property type="entry name" value="Nucleotidylyl transferase"/>
    <property type="match status" value="1"/>
</dbReference>
<dbReference type="SUPFAM" id="SSF46589">
    <property type="entry name" value="tRNA-binding arm"/>
    <property type="match status" value="1"/>
</dbReference>
<dbReference type="SUPFAM" id="SSF50677">
    <property type="entry name" value="ValRS/IleRS/LeuRS editing domain"/>
    <property type="match status" value="1"/>
</dbReference>
<dbReference type="PROSITE" id="PS00178">
    <property type="entry name" value="AA_TRNA_LIGASE_I"/>
    <property type="match status" value="1"/>
</dbReference>
<proteinExistence type="inferred from homology"/>
<reference key="1">
    <citation type="journal article" date="1999" name="Nature">
        <title>Evidence for lateral gene transfer between Archaea and Bacteria from genome sequence of Thermotoga maritima.</title>
        <authorList>
            <person name="Nelson K.E."/>
            <person name="Clayton R.A."/>
            <person name="Gill S.R."/>
            <person name="Gwinn M.L."/>
            <person name="Dodson R.J."/>
            <person name="Haft D.H."/>
            <person name="Hickey E.K."/>
            <person name="Peterson J.D."/>
            <person name="Nelson W.C."/>
            <person name="Ketchum K.A."/>
            <person name="McDonald L.A."/>
            <person name="Utterback T.R."/>
            <person name="Malek J.A."/>
            <person name="Linher K.D."/>
            <person name="Garrett M.M."/>
            <person name="Stewart A.M."/>
            <person name="Cotton M.D."/>
            <person name="Pratt M.S."/>
            <person name="Phillips C.A."/>
            <person name="Richardson D.L."/>
            <person name="Heidelberg J.F."/>
            <person name="Sutton G.G."/>
            <person name="Fleischmann R.D."/>
            <person name="Eisen J.A."/>
            <person name="White O."/>
            <person name="Salzberg S.L."/>
            <person name="Smith H.O."/>
            <person name="Venter J.C."/>
            <person name="Fraser C.M."/>
        </authorList>
    </citation>
    <scope>NUCLEOTIDE SEQUENCE [LARGE SCALE GENOMIC DNA]</scope>
    <source>
        <strain>ATCC 43589 / DSM 3109 / JCM 10099 / NBRC 100826 / MSB8</strain>
    </source>
</reference>
<keyword id="KW-0030">Aminoacyl-tRNA synthetase</keyword>
<keyword id="KW-0067">ATP-binding</keyword>
<keyword id="KW-0175">Coiled coil</keyword>
<keyword id="KW-0963">Cytoplasm</keyword>
<keyword id="KW-0436">Ligase</keyword>
<keyword id="KW-0547">Nucleotide-binding</keyword>
<keyword id="KW-0648">Protein biosynthesis</keyword>
<keyword id="KW-1185">Reference proteome</keyword>
<protein>
    <recommendedName>
        <fullName evidence="1">Valine--tRNA ligase</fullName>
        <ecNumber evidence="1">6.1.1.9</ecNumber>
    </recommendedName>
    <alternativeName>
        <fullName evidence="1">Valyl-tRNA synthetase</fullName>
        <shortName evidence="1">ValRS</shortName>
    </alternativeName>
</protein>
<feature type="chain" id="PRO_0000106238" description="Valine--tRNA ligase">
    <location>
        <begin position="1"/>
        <end position="865"/>
    </location>
</feature>
<feature type="coiled-coil region" evidence="1">
    <location>
        <begin position="797"/>
        <end position="865"/>
    </location>
</feature>
<feature type="short sequence motif" description="'HIGH' region">
    <location>
        <begin position="43"/>
        <end position="53"/>
    </location>
</feature>
<feature type="short sequence motif" description="'KMSKS' region">
    <location>
        <begin position="523"/>
        <end position="527"/>
    </location>
</feature>
<feature type="binding site" evidence="1">
    <location>
        <position position="526"/>
    </location>
    <ligand>
        <name>ATP</name>
        <dbReference type="ChEBI" id="CHEBI:30616"/>
    </ligand>
</feature>
<name>SYV_THEMA</name>
<evidence type="ECO:0000255" key="1">
    <source>
        <dbReference type="HAMAP-Rule" id="MF_02004"/>
    </source>
</evidence>
<organism>
    <name type="scientific">Thermotoga maritima (strain ATCC 43589 / DSM 3109 / JCM 10099 / NBRC 100826 / MSB8)</name>
    <dbReference type="NCBI Taxonomy" id="243274"/>
    <lineage>
        <taxon>Bacteria</taxon>
        <taxon>Thermotogati</taxon>
        <taxon>Thermotogota</taxon>
        <taxon>Thermotogae</taxon>
        <taxon>Thermotogales</taxon>
        <taxon>Thermotogaceae</taxon>
        <taxon>Thermotoga</taxon>
    </lineage>
</organism>
<sequence>MAELSTRYNPAEIETKWYRYWEEKGYFTPKGVGEKFSIVIPPPNITGRIHMGHALNITLQDIVVRYKRMKGYDVLWVPGEDHAGIATQNAVEKFLLQTQGKTREEIGREKFLEITWEWANKYRREIREQIKALGASVDWTRERFTLDEGLSRAVRKVFVELYRKGLIYRGKYIVNWCPRCKTVLSDEEVEHKEHKSKLYYVKYPVKDSDEYIVVATTRPETMLGDTAVAVHPEDERYKNFVGKTLILPLVGREIPVVADKYVDPKFGTGAVKVTPAHDPNDYLIAQRHNLPMIEIFDDNARINENGGKYKGLDRYEAREKIVKDLEEQGFLVKIEDYTHSVGHCYRCDTVIEPKLSDQWFVSTKPLAKRAIEAVENGEIRFFPERWTKVYLNWMYEIRDWCISRQLWWGHRIPVWYCQDCGHLNVSEEDVEKCEKCGSTNLKQDEDVLDTWFSSALWPFSTLGWPEETEDLKRYYPTDLLVTGFDIIFFWVARMIMMGYEFMNDKPFSHVYIHQLVRDKYGRKMSKSLGNGIDPLEVIDEYGADPMRFTLAILAAQGRDIKLDPRYFDAYKKFANKIWNATRFVLMNLEDYKEVPLENLKTVDKWILTRLNKTVEEVTNALENYDFNIAARTIYNFFWDDFCDWYIEASKPRLKTEERNLVQTVLVKVLDASLRLLHPFMPFLTEELWQKLPVAGESITIAKWPEIERELIDETAEKEFTRLMNMVRGVRNVRAEMNLPQSQRVKVYIKGYEVTEEEELLLKTLGNIEEVSFVNEKPPKTATAYVEEEIEAYVDLGGLIDFEKEKERLKQIMEKIQKEIDRLEKKLANKDFVEKAPEEVVEETKEKLNTNRERLARLESILRDLE</sequence>
<comment type="function">
    <text evidence="1">Catalyzes the attachment of valine to tRNA(Val). As ValRS can inadvertently accommodate and process structurally similar amino acids such as threonine, to avoid such errors, it has a 'posttransfer' editing activity that hydrolyzes mischarged Thr-tRNA(Val) in a tRNA-dependent manner.</text>
</comment>
<comment type="catalytic activity">
    <reaction evidence="1">
        <text>tRNA(Val) + L-valine + ATP = L-valyl-tRNA(Val) + AMP + diphosphate</text>
        <dbReference type="Rhea" id="RHEA:10704"/>
        <dbReference type="Rhea" id="RHEA-COMP:9672"/>
        <dbReference type="Rhea" id="RHEA-COMP:9708"/>
        <dbReference type="ChEBI" id="CHEBI:30616"/>
        <dbReference type="ChEBI" id="CHEBI:33019"/>
        <dbReference type="ChEBI" id="CHEBI:57762"/>
        <dbReference type="ChEBI" id="CHEBI:78442"/>
        <dbReference type="ChEBI" id="CHEBI:78537"/>
        <dbReference type="ChEBI" id="CHEBI:456215"/>
        <dbReference type="EC" id="6.1.1.9"/>
    </reaction>
</comment>
<comment type="subunit">
    <text evidence="1">Monomer.</text>
</comment>
<comment type="subcellular location">
    <subcellularLocation>
        <location evidence="1">Cytoplasm</location>
    </subcellularLocation>
</comment>
<comment type="domain">
    <text evidence="1">ValRS has two distinct active sites: one for aminoacylation and one for editing. The misactivated threonine is translocated from the active site to the editing site.</text>
</comment>
<comment type="domain">
    <text evidence="1">The C-terminal coiled-coil domain is crucial for aminoacylation activity.</text>
</comment>
<comment type="similarity">
    <text evidence="1">Belongs to the class-I aminoacyl-tRNA synthetase family. ValS type 1 subfamily.</text>
</comment>